<organism>
    <name type="scientific">Candida albicans (strain SC5314 / ATCC MYA-2876)</name>
    <name type="common">Yeast</name>
    <dbReference type="NCBI Taxonomy" id="237561"/>
    <lineage>
        <taxon>Eukaryota</taxon>
        <taxon>Fungi</taxon>
        <taxon>Dikarya</taxon>
        <taxon>Ascomycota</taxon>
        <taxon>Saccharomycotina</taxon>
        <taxon>Pichiomycetes</taxon>
        <taxon>Debaryomycetaceae</taxon>
        <taxon>Candida/Lodderomyces clade</taxon>
        <taxon>Candida</taxon>
    </lineage>
</organism>
<comment type="function">
    <text evidence="2">Involved in the first step of the non-oxidative branch of the pentose phosphate pathway. It catalyzes the reversible conversion of ribose-5-phosphate to ribulose 5-phosphate.</text>
</comment>
<comment type="catalytic activity">
    <reaction evidence="2">
        <text>aldehydo-D-ribose 5-phosphate = D-ribulose 5-phosphate</text>
        <dbReference type="Rhea" id="RHEA:14657"/>
        <dbReference type="ChEBI" id="CHEBI:58121"/>
        <dbReference type="ChEBI" id="CHEBI:58273"/>
        <dbReference type="EC" id="5.3.1.6"/>
    </reaction>
</comment>
<comment type="pathway">
    <text evidence="2">Carbohydrate degradation; pentose phosphate pathway; D-ribose 5-phosphate from D-ribulose 5-phosphate (non-oxidative stage): step 1/1.</text>
</comment>
<comment type="subcellular location">
    <subcellularLocation>
        <location evidence="3">Cytoplasm</location>
    </subcellularLocation>
</comment>
<comment type="similarity">
    <text evidence="3">Belongs to the ribose 5-phosphate isomerase family.</text>
</comment>
<protein>
    <recommendedName>
        <fullName>Ribose-5-phosphate isomerase</fullName>
        <ecNumber evidence="2">5.3.1.6</ecNumber>
    </recommendedName>
    <alternativeName>
        <fullName>D-ribose-5-phosphate ketol-isomerase</fullName>
    </alternativeName>
    <alternativeName>
        <fullName>Phosphoriboisomerase</fullName>
    </alternativeName>
</protein>
<name>RPIA_CANAL</name>
<gene>
    <name type="primary">RKI1</name>
    <name type="ordered locus">CAALFM_C301480CA</name>
    <name type="ORF">CaO19.1701</name>
    <name type="ORF">CaO19.9268</name>
</gene>
<proteinExistence type="inferred from homology"/>
<accession>Q5AJ92</accession>
<accession>A0A1D8PJ85</accession>
<sequence>MSSTSKVESAKKLAAYKAVDENFPKDAKVIGIGSGSTVIYAAERIGQLDNKDSFICIPTGFQSKQLIIDNGLRLGTIEQYPDIDIAFDGADEVDPQLNLIKGGGACLFQEKLVAASAKKFVVVADYRKKSDKLGQSWRQGVPIEIVPNSYSKIIQELSKKLGAKNVDLRQGGKAKAGPIITDNNNFLLDADFGEIEIDNVGKLHEQIKLLVGVVETGLFTNMANKAYFGEEDGSVSVWSK</sequence>
<keyword id="KW-0963">Cytoplasm</keyword>
<keyword id="KW-0413">Isomerase</keyword>
<keyword id="KW-1185">Reference proteome</keyword>
<reference key="1">
    <citation type="journal article" date="2004" name="Proc. Natl. Acad. Sci. U.S.A.">
        <title>The diploid genome sequence of Candida albicans.</title>
        <authorList>
            <person name="Jones T."/>
            <person name="Federspiel N.A."/>
            <person name="Chibana H."/>
            <person name="Dungan J."/>
            <person name="Kalman S."/>
            <person name="Magee B.B."/>
            <person name="Newport G."/>
            <person name="Thorstenson Y.R."/>
            <person name="Agabian N."/>
            <person name="Magee P.T."/>
            <person name="Davis R.W."/>
            <person name="Scherer S."/>
        </authorList>
    </citation>
    <scope>NUCLEOTIDE SEQUENCE [LARGE SCALE GENOMIC DNA]</scope>
    <source>
        <strain>SC5314 / ATCC MYA-2876</strain>
    </source>
</reference>
<reference key="2">
    <citation type="journal article" date="2007" name="Genome Biol.">
        <title>Assembly of the Candida albicans genome into sixteen supercontigs aligned on the eight chromosomes.</title>
        <authorList>
            <person name="van het Hoog M."/>
            <person name="Rast T.J."/>
            <person name="Martchenko M."/>
            <person name="Grindle S."/>
            <person name="Dignard D."/>
            <person name="Hogues H."/>
            <person name="Cuomo C."/>
            <person name="Berriman M."/>
            <person name="Scherer S."/>
            <person name="Magee B.B."/>
            <person name="Whiteway M."/>
            <person name="Chibana H."/>
            <person name="Nantel A."/>
            <person name="Magee P.T."/>
        </authorList>
    </citation>
    <scope>GENOME REANNOTATION</scope>
    <source>
        <strain>SC5314 / ATCC MYA-2876</strain>
    </source>
</reference>
<reference key="3">
    <citation type="journal article" date="2013" name="Genome Biol.">
        <title>Assembly of a phased diploid Candida albicans genome facilitates allele-specific measurements and provides a simple model for repeat and indel structure.</title>
        <authorList>
            <person name="Muzzey D."/>
            <person name="Schwartz K."/>
            <person name="Weissman J.S."/>
            <person name="Sherlock G."/>
        </authorList>
    </citation>
    <scope>NUCLEOTIDE SEQUENCE [LARGE SCALE GENOMIC DNA]</scope>
    <scope>GENOME REANNOTATION</scope>
    <source>
        <strain>SC5314 / ATCC MYA-2876</strain>
    </source>
</reference>
<evidence type="ECO:0000250" key="1">
    <source>
        <dbReference type="UniProtKB" id="O50083"/>
    </source>
</evidence>
<evidence type="ECO:0000250" key="2">
    <source>
        <dbReference type="UniProtKB" id="P0A7Z0"/>
    </source>
</evidence>
<evidence type="ECO:0000305" key="3"/>
<feature type="chain" id="PRO_0000339884" description="Ribose-5-phosphate isomerase">
    <location>
        <begin position="1"/>
        <end position="240"/>
    </location>
</feature>
<feature type="active site" description="Proton acceptor" evidence="2">
    <location>
        <position position="110"/>
    </location>
</feature>
<feature type="binding site" evidence="1">
    <location>
        <begin position="34"/>
        <end position="37"/>
    </location>
    <ligand>
        <name>substrate</name>
    </ligand>
</feature>
<feature type="binding site" evidence="1">
    <location>
        <begin position="88"/>
        <end position="91"/>
    </location>
    <ligand>
        <name>substrate</name>
    </ligand>
</feature>
<feature type="binding site" evidence="1">
    <location>
        <begin position="101"/>
        <end position="104"/>
    </location>
    <ligand>
        <name>substrate</name>
    </ligand>
</feature>
<feature type="binding site" evidence="1">
    <location>
        <position position="128"/>
    </location>
    <ligand>
        <name>substrate</name>
    </ligand>
</feature>
<feature type="site" description="Plays a direct or indirect catalytic role" evidence="1">
    <location>
        <position position="88"/>
    </location>
</feature>
<dbReference type="EC" id="5.3.1.6" evidence="2"/>
<dbReference type="EMBL" id="CP017625">
    <property type="protein sequence ID" value="AOW28190.1"/>
    <property type="molecule type" value="Genomic_DNA"/>
</dbReference>
<dbReference type="RefSeq" id="XP_721773.2">
    <property type="nucleotide sequence ID" value="XM_716680.2"/>
</dbReference>
<dbReference type="SMR" id="Q5AJ92"/>
<dbReference type="FunCoup" id="Q5AJ92">
    <property type="interactions" value="955"/>
</dbReference>
<dbReference type="STRING" id="237561.Q5AJ92"/>
<dbReference type="EnsemblFungi" id="C3_01480C_A-T">
    <property type="protein sequence ID" value="C3_01480C_A-T-p1"/>
    <property type="gene ID" value="C3_01480C_A"/>
</dbReference>
<dbReference type="GeneID" id="3636574"/>
<dbReference type="KEGG" id="cal:CAALFM_C301480CA"/>
<dbReference type="CGD" id="CAL0000188418">
    <property type="gene designation" value="RKI1"/>
</dbReference>
<dbReference type="VEuPathDB" id="FungiDB:C3_01480C_A"/>
<dbReference type="eggNOG" id="KOG3075">
    <property type="taxonomic scope" value="Eukaryota"/>
</dbReference>
<dbReference type="HOGENOM" id="CLU_056590_0_0_1"/>
<dbReference type="InParanoid" id="Q5AJ92"/>
<dbReference type="OMA" id="ACHVQEK"/>
<dbReference type="OrthoDB" id="1555531at2759"/>
<dbReference type="UniPathway" id="UPA00115">
    <property type="reaction ID" value="UER00412"/>
</dbReference>
<dbReference type="PRO" id="PR:Q5AJ92"/>
<dbReference type="Proteomes" id="UP000000559">
    <property type="component" value="Chromosome 3"/>
</dbReference>
<dbReference type="GO" id="GO:0005737">
    <property type="term" value="C:cytoplasm"/>
    <property type="evidence" value="ECO:0000318"/>
    <property type="project" value="GO_Central"/>
</dbReference>
<dbReference type="GO" id="GO:0004751">
    <property type="term" value="F:ribose-5-phosphate isomerase activity"/>
    <property type="evidence" value="ECO:0000318"/>
    <property type="project" value="GO_Central"/>
</dbReference>
<dbReference type="GO" id="GO:0006014">
    <property type="term" value="P:D-ribose metabolic process"/>
    <property type="evidence" value="ECO:0000318"/>
    <property type="project" value="GO_Central"/>
</dbReference>
<dbReference type="GO" id="GO:0009052">
    <property type="term" value="P:pentose-phosphate shunt, non-oxidative branch"/>
    <property type="evidence" value="ECO:0000318"/>
    <property type="project" value="GO_Central"/>
</dbReference>
<dbReference type="GO" id="GO:0008615">
    <property type="term" value="P:pyridoxine biosynthetic process"/>
    <property type="evidence" value="ECO:0007669"/>
    <property type="project" value="EnsemblFungi"/>
</dbReference>
<dbReference type="CDD" id="cd01398">
    <property type="entry name" value="RPI_A"/>
    <property type="match status" value="1"/>
</dbReference>
<dbReference type="FunFam" id="3.40.50.1360:FF:000014">
    <property type="entry name" value="Ribose 5-phosphate isomerase"/>
    <property type="match status" value="1"/>
</dbReference>
<dbReference type="FunFam" id="3.30.70.260:FF:000053">
    <property type="entry name" value="Ribose-5-phosphate isomerase, putative"/>
    <property type="match status" value="1"/>
</dbReference>
<dbReference type="Gene3D" id="3.30.70.260">
    <property type="match status" value="1"/>
</dbReference>
<dbReference type="Gene3D" id="3.40.50.1360">
    <property type="match status" value="1"/>
</dbReference>
<dbReference type="InterPro" id="IPR037171">
    <property type="entry name" value="NagB/RpiA_transferase-like"/>
</dbReference>
<dbReference type="InterPro" id="IPR004788">
    <property type="entry name" value="Ribose5P_isomerase_type_A"/>
</dbReference>
<dbReference type="NCBIfam" id="NF001924">
    <property type="entry name" value="PRK00702.1"/>
    <property type="match status" value="1"/>
</dbReference>
<dbReference type="NCBIfam" id="TIGR00021">
    <property type="entry name" value="rpiA"/>
    <property type="match status" value="1"/>
</dbReference>
<dbReference type="PANTHER" id="PTHR11934">
    <property type="entry name" value="RIBOSE-5-PHOSPHATE ISOMERASE"/>
    <property type="match status" value="1"/>
</dbReference>
<dbReference type="PANTHER" id="PTHR11934:SF0">
    <property type="entry name" value="RIBOSE-5-PHOSPHATE ISOMERASE"/>
    <property type="match status" value="1"/>
</dbReference>
<dbReference type="Pfam" id="PF06026">
    <property type="entry name" value="Rib_5-P_isom_A"/>
    <property type="match status" value="1"/>
</dbReference>
<dbReference type="SUPFAM" id="SSF75445">
    <property type="entry name" value="D-ribose-5-phosphate isomerase (RpiA), lid domain"/>
    <property type="match status" value="1"/>
</dbReference>
<dbReference type="SUPFAM" id="SSF100950">
    <property type="entry name" value="NagB/RpiA/CoA transferase-like"/>
    <property type="match status" value="1"/>
</dbReference>